<sequence length="306" mass="33514">MSTLGHQYDNSLVSNAFGFLRLPMNFMPYESDADWVITGVPFDMATSGRAGGRHGPAAIRQVSTNLAWEHNRFPWNFDMRERLNVVDCGDLVYAFGDAREMSEKLQAHAEKLLAAGKRMLSFGGDHFVTLPLLRAHAKHFGKMALVHFDAHTDTYANGCEFDHGTMFYTAPNEGLIDPNHSVQIGIRTEFDKDNGFTVLDAGQVNDRSVDDVIAQVKQIVGDMPVYLTFDIDCLDPAFAPGTGTPVIGGLTSDRAIKLVRGLKDLNIVGMDVVEVAPAYDQSEITALAAATLALEMLYIQAAKKGE</sequence>
<proteinExistence type="inferred from homology"/>
<comment type="function">
    <text evidence="1">Catalyzes the formation of putrescine from agmatine.</text>
</comment>
<comment type="catalytic activity">
    <reaction evidence="1">
        <text>agmatine + H2O = urea + putrescine</text>
        <dbReference type="Rhea" id="RHEA:13929"/>
        <dbReference type="ChEBI" id="CHEBI:15377"/>
        <dbReference type="ChEBI" id="CHEBI:16199"/>
        <dbReference type="ChEBI" id="CHEBI:58145"/>
        <dbReference type="ChEBI" id="CHEBI:326268"/>
        <dbReference type="EC" id="3.5.3.11"/>
    </reaction>
</comment>
<comment type="cofactor">
    <cofactor evidence="1">
        <name>Mn(2+)</name>
        <dbReference type="ChEBI" id="CHEBI:29035"/>
    </cofactor>
</comment>
<comment type="pathway">
    <text evidence="1">Amine and polyamine biosynthesis; putrescine biosynthesis via agmatine pathway; putrescine from agmatine: step 1/1.</text>
</comment>
<comment type="similarity">
    <text evidence="1">Belongs to the arginase family. Agmatinase subfamily.</text>
</comment>
<organism>
    <name type="scientific">Klebsiella pneumoniae (strain 342)</name>
    <dbReference type="NCBI Taxonomy" id="507522"/>
    <lineage>
        <taxon>Bacteria</taxon>
        <taxon>Pseudomonadati</taxon>
        <taxon>Pseudomonadota</taxon>
        <taxon>Gammaproteobacteria</taxon>
        <taxon>Enterobacterales</taxon>
        <taxon>Enterobacteriaceae</taxon>
        <taxon>Klebsiella/Raoultella group</taxon>
        <taxon>Klebsiella</taxon>
        <taxon>Klebsiella pneumoniae complex</taxon>
    </lineage>
</organism>
<accession>B5XUB2</accession>
<gene>
    <name evidence="1" type="primary">speB</name>
    <name type="ordered locus">KPK_0738</name>
</gene>
<feature type="chain" id="PRO_1000145616" description="Agmatinase">
    <location>
        <begin position="1"/>
        <end position="306"/>
    </location>
</feature>
<feature type="binding site" evidence="1">
    <location>
        <position position="126"/>
    </location>
    <ligand>
        <name>Mn(2+)</name>
        <dbReference type="ChEBI" id="CHEBI:29035"/>
    </ligand>
</feature>
<feature type="binding site" evidence="1">
    <location>
        <position position="149"/>
    </location>
    <ligand>
        <name>Mn(2+)</name>
        <dbReference type="ChEBI" id="CHEBI:29035"/>
    </ligand>
</feature>
<feature type="binding site" evidence="1">
    <location>
        <position position="151"/>
    </location>
    <ligand>
        <name>Mn(2+)</name>
        <dbReference type="ChEBI" id="CHEBI:29035"/>
    </ligand>
</feature>
<feature type="binding site" evidence="1">
    <location>
        <position position="153"/>
    </location>
    <ligand>
        <name>Mn(2+)</name>
        <dbReference type="ChEBI" id="CHEBI:29035"/>
    </ligand>
</feature>
<feature type="binding site" evidence="1">
    <location>
        <position position="230"/>
    </location>
    <ligand>
        <name>Mn(2+)</name>
        <dbReference type="ChEBI" id="CHEBI:29035"/>
    </ligand>
</feature>
<feature type="binding site" evidence="1">
    <location>
        <position position="232"/>
    </location>
    <ligand>
        <name>Mn(2+)</name>
        <dbReference type="ChEBI" id="CHEBI:29035"/>
    </ligand>
</feature>
<keyword id="KW-0378">Hydrolase</keyword>
<keyword id="KW-0464">Manganese</keyword>
<keyword id="KW-0479">Metal-binding</keyword>
<keyword id="KW-0620">Polyamine biosynthesis</keyword>
<keyword id="KW-0661">Putrescine biosynthesis</keyword>
<keyword id="KW-0745">Spermidine biosynthesis</keyword>
<dbReference type="EC" id="3.5.3.11" evidence="1"/>
<dbReference type="EMBL" id="CP000964">
    <property type="protein sequence ID" value="ACI11642.1"/>
    <property type="molecule type" value="Genomic_DNA"/>
</dbReference>
<dbReference type="SMR" id="B5XUB2"/>
<dbReference type="KEGG" id="kpe:KPK_0738"/>
<dbReference type="HOGENOM" id="CLU_039478_0_0_6"/>
<dbReference type="UniPathway" id="UPA00534">
    <property type="reaction ID" value="UER00287"/>
</dbReference>
<dbReference type="Proteomes" id="UP000001734">
    <property type="component" value="Chromosome"/>
</dbReference>
<dbReference type="GO" id="GO:0008783">
    <property type="term" value="F:agmatinase activity"/>
    <property type="evidence" value="ECO:0007669"/>
    <property type="project" value="UniProtKB-UniRule"/>
</dbReference>
<dbReference type="GO" id="GO:0030145">
    <property type="term" value="F:manganese ion binding"/>
    <property type="evidence" value="ECO:0007669"/>
    <property type="project" value="InterPro"/>
</dbReference>
<dbReference type="GO" id="GO:0033389">
    <property type="term" value="P:putrescine biosynthetic process from arginine, via agmatine"/>
    <property type="evidence" value="ECO:0007669"/>
    <property type="project" value="TreeGrafter"/>
</dbReference>
<dbReference type="GO" id="GO:0008295">
    <property type="term" value="P:spermidine biosynthetic process"/>
    <property type="evidence" value="ECO:0007669"/>
    <property type="project" value="UniProtKB-UniRule"/>
</dbReference>
<dbReference type="CDD" id="cd11592">
    <property type="entry name" value="Agmatinase_PAH"/>
    <property type="match status" value="1"/>
</dbReference>
<dbReference type="FunFam" id="3.40.800.10:FF:000001">
    <property type="entry name" value="Agmatinase"/>
    <property type="match status" value="1"/>
</dbReference>
<dbReference type="Gene3D" id="3.40.800.10">
    <property type="entry name" value="Ureohydrolase domain"/>
    <property type="match status" value="1"/>
</dbReference>
<dbReference type="HAMAP" id="MF_01418">
    <property type="entry name" value="SpeB"/>
    <property type="match status" value="1"/>
</dbReference>
<dbReference type="InterPro" id="IPR023694">
    <property type="entry name" value="Agmatinase"/>
</dbReference>
<dbReference type="InterPro" id="IPR005925">
    <property type="entry name" value="Agmatinase-rel"/>
</dbReference>
<dbReference type="InterPro" id="IPR006035">
    <property type="entry name" value="Ureohydrolase"/>
</dbReference>
<dbReference type="InterPro" id="IPR023696">
    <property type="entry name" value="Ureohydrolase_dom_sf"/>
</dbReference>
<dbReference type="InterPro" id="IPR020855">
    <property type="entry name" value="Ureohydrolase_Mn_BS"/>
</dbReference>
<dbReference type="NCBIfam" id="TIGR01230">
    <property type="entry name" value="agmatinase"/>
    <property type="match status" value="1"/>
</dbReference>
<dbReference type="NCBIfam" id="NF002564">
    <property type="entry name" value="PRK02190.1"/>
    <property type="match status" value="1"/>
</dbReference>
<dbReference type="PANTHER" id="PTHR11358">
    <property type="entry name" value="ARGINASE/AGMATINASE"/>
    <property type="match status" value="1"/>
</dbReference>
<dbReference type="PANTHER" id="PTHR11358:SF26">
    <property type="entry name" value="GUANIDINO ACID HYDROLASE, MITOCHONDRIAL"/>
    <property type="match status" value="1"/>
</dbReference>
<dbReference type="Pfam" id="PF00491">
    <property type="entry name" value="Arginase"/>
    <property type="match status" value="1"/>
</dbReference>
<dbReference type="PIRSF" id="PIRSF036979">
    <property type="entry name" value="Arginase"/>
    <property type="match status" value="1"/>
</dbReference>
<dbReference type="SUPFAM" id="SSF52768">
    <property type="entry name" value="Arginase/deacetylase"/>
    <property type="match status" value="1"/>
</dbReference>
<dbReference type="PROSITE" id="PS01053">
    <property type="entry name" value="ARGINASE_1"/>
    <property type="match status" value="1"/>
</dbReference>
<dbReference type="PROSITE" id="PS51409">
    <property type="entry name" value="ARGINASE_2"/>
    <property type="match status" value="1"/>
</dbReference>
<protein>
    <recommendedName>
        <fullName evidence="1">Agmatinase</fullName>
        <ecNumber evidence="1">3.5.3.11</ecNumber>
    </recommendedName>
    <alternativeName>
        <fullName evidence="1">Agmatine ureohydrolase</fullName>
        <shortName evidence="1">AUH</shortName>
    </alternativeName>
</protein>
<name>SPEB_KLEP3</name>
<evidence type="ECO:0000255" key="1">
    <source>
        <dbReference type="HAMAP-Rule" id="MF_01418"/>
    </source>
</evidence>
<reference key="1">
    <citation type="journal article" date="2008" name="PLoS Genet.">
        <title>Complete genome sequence of the N2-fixing broad host range endophyte Klebsiella pneumoniae 342 and virulence predictions verified in mice.</title>
        <authorList>
            <person name="Fouts D.E."/>
            <person name="Tyler H.L."/>
            <person name="DeBoy R.T."/>
            <person name="Daugherty S."/>
            <person name="Ren Q."/>
            <person name="Badger J.H."/>
            <person name="Durkin A.S."/>
            <person name="Huot H."/>
            <person name="Shrivastava S."/>
            <person name="Kothari S."/>
            <person name="Dodson R.J."/>
            <person name="Mohamoud Y."/>
            <person name="Khouri H."/>
            <person name="Roesch L.F.W."/>
            <person name="Krogfelt K.A."/>
            <person name="Struve C."/>
            <person name="Triplett E.W."/>
            <person name="Methe B.A."/>
        </authorList>
    </citation>
    <scope>NUCLEOTIDE SEQUENCE [LARGE SCALE GENOMIC DNA]</scope>
    <source>
        <strain>342</strain>
    </source>
</reference>